<name>YBEY_WOLWR</name>
<protein>
    <recommendedName>
        <fullName evidence="1">Endoribonuclease YbeY</fullName>
        <ecNumber evidence="1">3.1.-.-</ecNumber>
    </recommendedName>
</protein>
<comment type="function">
    <text evidence="1">Single strand-specific metallo-endoribonuclease involved in late-stage 70S ribosome quality control and in maturation of the 3' terminus of the 16S rRNA.</text>
</comment>
<comment type="cofactor">
    <cofactor evidence="1">
        <name>Zn(2+)</name>
        <dbReference type="ChEBI" id="CHEBI:29105"/>
    </cofactor>
    <text evidence="1">Binds 1 zinc ion.</text>
</comment>
<comment type="subcellular location">
    <subcellularLocation>
        <location evidence="1">Cytoplasm</location>
    </subcellularLocation>
</comment>
<comment type="similarity">
    <text evidence="1">Belongs to the endoribonuclease YbeY family.</text>
</comment>
<feature type="chain" id="PRO_1000200008" description="Endoribonuclease YbeY">
    <location>
        <begin position="1"/>
        <end position="150"/>
    </location>
</feature>
<feature type="binding site" evidence="1">
    <location>
        <position position="113"/>
    </location>
    <ligand>
        <name>Zn(2+)</name>
        <dbReference type="ChEBI" id="CHEBI:29105"/>
        <note>catalytic</note>
    </ligand>
</feature>
<feature type="binding site" evidence="1">
    <location>
        <position position="117"/>
    </location>
    <ligand>
        <name>Zn(2+)</name>
        <dbReference type="ChEBI" id="CHEBI:29105"/>
        <note>catalytic</note>
    </ligand>
</feature>
<feature type="binding site" evidence="1">
    <location>
        <position position="123"/>
    </location>
    <ligand>
        <name>Zn(2+)</name>
        <dbReference type="ChEBI" id="CHEBI:29105"/>
        <note>catalytic</note>
    </ligand>
</feature>
<gene>
    <name evidence="1" type="primary">ybeY</name>
    <name type="ordered locus">WRi_007500</name>
</gene>
<proteinExistence type="inferred from homology"/>
<keyword id="KW-0963">Cytoplasm</keyword>
<keyword id="KW-0255">Endonuclease</keyword>
<keyword id="KW-0378">Hydrolase</keyword>
<keyword id="KW-0479">Metal-binding</keyword>
<keyword id="KW-0540">Nuclease</keyword>
<keyword id="KW-0690">Ribosome biogenesis</keyword>
<keyword id="KW-0698">rRNA processing</keyword>
<keyword id="KW-0862">Zinc</keyword>
<evidence type="ECO:0000255" key="1">
    <source>
        <dbReference type="HAMAP-Rule" id="MF_00009"/>
    </source>
</evidence>
<organism>
    <name type="scientific">Wolbachia sp. subsp. Drosophila simulans (strain wRi)</name>
    <dbReference type="NCBI Taxonomy" id="66084"/>
    <lineage>
        <taxon>Bacteria</taxon>
        <taxon>Pseudomonadati</taxon>
        <taxon>Pseudomonadota</taxon>
        <taxon>Alphaproteobacteria</taxon>
        <taxon>Rickettsiales</taxon>
        <taxon>Anaplasmataceae</taxon>
        <taxon>Wolbachieae</taxon>
        <taxon>Wolbachia</taxon>
    </lineage>
</organism>
<reference key="1">
    <citation type="journal article" date="2009" name="Proc. Natl. Acad. Sci. U.S.A.">
        <title>The mosaic genome structure of the Wolbachia wRi strain infecting Drosophila simulans.</title>
        <authorList>
            <person name="Klasson L."/>
            <person name="Westberg J."/>
            <person name="Sapountzis P."/>
            <person name="Naeslund K."/>
            <person name="Lutnaes Y."/>
            <person name="Darby A.C."/>
            <person name="Veneti Z."/>
            <person name="Chen L."/>
            <person name="Braig H.R."/>
            <person name="Garrett R."/>
            <person name="Bourtzis K."/>
            <person name="Andersson S.G."/>
        </authorList>
    </citation>
    <scope>NUCLEOTIDE SEQUENCE [LARGE SCALE GENOMIC DNA]</scope>
    <source>
        <strain>wRi</strain>
    </source>
</reference>
<sequence length="150" mass="17295">MLEVNILDKKWCSIIENPKNFVLGVINASLKELKIDHYKPNISIALADDDLLHQLNLKFREMDKPTNVLSFPYEQLSNECDLGDIAISIDTIKRESHEYYIPILAHIAHMLVHGLLHLLGYDHQKKDEEIIMKNLEREILASLGYNMCAI</sequence>
<accession>C0R3K7</accession>
<dbReference type="EC" id="3.1.-.-" evidence="1"/>
<dbReference type="EMBL" id="CP001391">
    <property type="protein sequence ID" value="ACN95499.1"/>
    <property type="molecule type" value="Genomic_DNA"/>
</dbReference>
<dbReference type="RefSeq" id="WP_010082473.1">
    <property type="nucleotide sequence ID" value="NZ_MKIF01000037.1"/>
</dbReference>
<dbReference type="SMR" id="C0R3K7"/>
<dbReference type="STRING" id="66084.WRi_007500"/>
<dbReference type="GeneID" id="70036209"/>
<dbReference type="KEGG" id="wri:WRi_007500"/>
<dbReference type="HOGENOM" id="CLU_106710_0_0_5"/>
<dbReference type="Proteomes" id="UP000001293">
    <property type="component" value="Chromosome"/>
</dbReference>
<dbReference type="GO" id="GO:0005737">
    <property type="term" value="C:cytoplasm"/>
    <property type="evidence" value="ECO:0007669"/>
    <property type="project" value="UniProtKB-SubCell"/>
</dbReference>
<dbReference type="GO" id="GO:0004222">
    <property type="term" value="F:metalloendopeptidase activity"/>
    <property type="evidence" value="ECO:0007669"/>
    <property type="project" value="InterPro"/>
</dbReference>
<dbReference type="GO" id="GO:0004521">
    <property type="term" value="F:RNA endonuclease activity"/>
    <property type="evidence" value="ECO:0007669"/>
    <property type="project" value="UniProtKB-UniRule"/>
</dbReference>
<dbReference type="GO" id="GO:0008270">
    <property type="term" value="F:zinc ion binding"/>
    <property type="evidence" value="ECO:0007669"/>
    <property type="project" value="UniProtKB-UniRule"/>
</dbReference>
<dbReference type="GO" id="GO:0006364">
    <property type="term" value="P:rRNA processing"/>
    <property type="evidence" value="ECO:0007669"/>
    <property type="project" value="UniProtKB-UniRule"/>
</dbReference>
<dbReference type="Gene3D" id="3.40.390.30">
    <property type="entry name" value="Metalloproteases ('zincins'), catalytic domain"/>
    <property type="match status" value="1"/>
</dbReference>
<dbReference type="HAMAP" id="MF_00009">
    <property type="entry name" value="Endoribonucl_YbeY"/>
    <property type="match status" value="1"/>
</dbReference>
<dbReference type="InterPro" id="IPR023091">
    <property type="entry name" value="MetalPrtase_cat_dom_sf_prd"/>
</dbReference>
<dbReference type="InterPro" id="IPR002036">
    <property type="entry name" value="YbeY"/>
</dbReference>
<dbReference type="InterPro" id="IPR020549">
    <property type="entry name" value="YbeY_CS"/>
</dbReference>
<dbReference type="NCBIfam" id="TIGR00043">
    <property type="entry name" value="rRNA maturation RNase YbeY"/>
    <property type="match status" value="1"/>
</dbReference>
<dbReference type="PANTHER" id="PTHR46986">
    <property type="entry name" value="ENDORIBONUCLEASE YBEY, CHLOROPLASTIC"/>
    <property type="match status" value="1"/>
</dbReference>
<dbReference type="PANTHER" id="PTHR46986:SF1">
    <property type="entry name" value="ENDORIBONUCLEASE YBEY, CHLOROPLASTIC"/>
    <property type="match status" value="1"/>
</dbReference>
<dbReference type="Pfam" id="PF02130">
    <property type="entry name" value="YbeY"/>
    <property type="match status" value="1"/>
</dbReference>
<dbReference type="SUPFAM" id="SSF55486">
    <property type="entry name" value="Metalloproteases ('zincins'), catalytic domain"/>
    <property type="match status" value="1"/>
</dbReference>
<dbReference type="PROSITE" id="PS01306">
    <property type="entry name" value="UPF0054"/>
    <property type="match status" value="1"/>
</dbReference>